<reference key="1">
    <citation type="journal article" date="2007" name="J. Bacteriol.">
        <title>Complete genome sequence of Haemophilus somnus (Histophilus somni) strain 129Pt and comparison to Haemophilus ducreyi 35000HP and Haemophilus influenzae Rd.</title>
        <authorList>
            <person name="Challacombe J.F."/>
            <person name="Duncan A.J."/>
            <person name="Brettin T.S."/>
            <person name="Bruce D."/>
            <person name="Chertkov O."/>
            <person name="Detter J.C."/>
            <person name="Han C.S."/>
            <person name="Misra M."/>
            <person name="Richardson P."/>
            <person name="Tapia R."/>
            <person name="Thayer N."/>
            <person name="Xie G."/>
            <person name="Inzana T.J."/>
        </authorList>
    </citation>
    <scope>NUCLEOTIDE SEQUENCE [LARGE SCALE GENOMIC DNA]</scope>
    <source>
        <strain>129Pt</strain>
    </source>
</reference>
<comment type="function">
    <text evidence="1">May act as a double-stranded DNA (dsDNA) mimic. Probably regulates the activity of a dsDNA-binding protein.</text>
</comment>
<comment type="similarity">
    <text evidence="1">Belongs to the putative dsDNA mimic protein family.</text>
</comment>
<sequence length="107" mass="12556">MTEKFKKLDPDTAIDIAYDIFLEMAGENLDPTDILLFNLQFEDHGGVEFVETADDWEQEIGVLIDPDEYAEVWVGLVNEQDEMDDIFAKFLISHKEEDREYHVVWKK</sequence>
<gene>
    <name type="ordered locus">HS_0995</name>
</gene>
<accession>Q0I370</accession>
<dbReference type="EMBL" id="CP000436">
    <property type="protein sequence ID" value="ABI25270.1"/>
    <property type="molecule type" value="Genomic_DNA"/>
</dbReference>
<dbReference type="SMR" id="Q0I370"/>
<dbReference type="KEGG" id="hso:HS_0995"/>
<dbReference type="eggNOG" id="COG3099">
    <property type="taxonomic scope" value="Bacteria"/>
</dbReference>
<dbReference type="HOGENOM" id="CLU_143392_0_0_6"/>
<dbReference type="Gene3D" id="3.10.450.140">
    <property type="entry name" value="dsDNA mimic, putative"/>
    <property type="match status" value="1"/>
</dbReference>
<dbReference type="HAMAP" id="MF_00680">
    <property type="entry name" value="Put_dsDNA_mimic"/>
    <property type="match status" value="1"/>
</dbReference>
<dbReference type="InterPro" id="IPR007376">
    <property type="entry name" value="dsDNA_mimic_put"/>
</dbReference>
<dbReference type="InterPro" id="IPR036763">
    <property type="entry name" value="Put_dsDNA_mimic_sf"/>
</dbReference>
<dbReference type="NCBIfam" id="NF003469">
    <property type="entry name" value="PRK05094.1"/>
    <property type="match status" value="1"/>
</dbReference>
<dbReference type="Pfam" id="PF04269">
    <property type="entry name" value="DUF440"/>
    <property type="match status" value="1"/>
</dbReference>
<dbReference type="PIRSF" id="PIRSF004916">
    <property type="entry name" value="UCP004916"/>
    <property type="match status" value="1"/>
</dbReference>
<dbReference type="SUPFAM" id="SSF102816">
    <property type="entry name" value="Putative dsDNA mimic"/>
    <property type="match status" value="1"/>
</dbReference>
<organism>
    <name type="scientific">Histophilus somni (strain 129Pt)</name>
    <name type="common">Haemophilus somnus</name>
    <dbReference type="NCBI Taxonomy" id="205914"/>
    <lineage>
        <taxon>Bacteria</taxon>
        <taxon>Pseudomonadati</taxon>
        <taxon>Pseudomonadota</taxon>
        <taxon>Gammaproteobacteria</taxon>
        <taxon>Pasteurellales</taxon>
        <taxon>Pasteurellaceae</taxon>
        <taxon>Histophilus</taxon>
    </lineage>
</organism>
<evidence type="ECO:0000255" key="1">
    <source>
        <dbReference type="HAMAP-Rule" id="MF_00680"/>
    </source>
</evidence>
<proteinExistence type="inferred from homology"/>
<protein>
    <recommendedName>
        <fullName evidence="1">Putative double-stranded DNA mimic protein HS_0995</fullName>
    </recommendedName>
</protein>
<name>Y995_HISS1</name>
<feature type="chain" id="PRO_1000044911" description="Putative double-stranded DNA mimic protein HS_0995">
    <location>
        <begin position="1"/>
        <end position="107"/>
    </location>
</feature>